<reference key="1">
    <citation type="submission" date="2004-08" db="EMBL/GenBank/DDBJ databases">
        <authorList>
            <consortium name="NIH - Xenopus Gene Collection (XGC) project"/>
        </authorList>
    </citation>
    <scope>NUCLEOTIDE SEQUENCE [LARGE SCALE MRNA]</scope>
    <source>
        <tissue>Kidney</tissue>
    </source>
</reference>
<gene>
    <name type="primary">dctn2-a</name>
</gene>
<organism>
    <name type="scientific">Xenopus laevis</name>
    <name type="common">African clawed frog</name>
    <dbReference type="NCBI Taxonomy" id="8355"/>
    <lineage>
        <taxon>Eukaryota</taxon>
        <taxon>Metazoa</taxon>
        <taxon>Chordata</taxon>
        <taxon>Craniata</taxon>
        <taxon>Vertebrata</taxon>
        <taxon>Euteleostomi</taxon>
        <taxon>Amphibia</taxon>
        <taxon>Batrachia</taxon>
        <taxon>Anura</taxon>
        <taxon>Pipoidea</taxon>
        <taxon>Pipidae</taxon>
        <taxon>Xenopodinae</taxon>
        <taxon>Xenopus</taxon>
        <taxon>Xenopus</taxon>
    </lineage>
</organism>
<sequence length="403" mass="44738">MADPKYADLPGIARNEPDVYETSDLPEDDQAEFDAEELTSTSVEHIIVNPNAAYDKFKDKKVGTRSLDFSDRITKSKRTGYESGEYEILGEGIGMKETPQQKYQRLLHEVQELTQEVEKTQSTVKESAAEEKLTPVALAKQVASLKQQLVSTHLEKLLGPDAAINLTDPDGALAKRLLTQLDAAKTRKNPEGKSPAKGPGPDTENLVTYELHCRPEQNKFSQAAKMAELEKRLGELEVAVRCDQDTQNPLTVGLQGSCLMDTVEILQAKVNLLDVASLDQVEARLQSVLGKMNEIAKHKAAIEDADTESKVHQLYETVQKWDSMSGTLPQVVQRLLTLKQLHEQAMQFGQLLTHLDTTQQMIANSLKDNTNALAMVQKAMKENLATVEDNFSNIDGRIKKLSK</sequence>
<evidence type="ECO:0000250" key="1">
    <source>
        <dbReference type="UniProtKB" id="A0A5G2QD80"/>
    </source>
</evidence>
<evidence type="ECO:0000250" key="2">
    <source>
        <dbReference type="UniProtKB" id="Q13561"/>
    </source>
</evidence>
<evidence type="ECO:0000250" key="3">
    <source>
        <dbReference type="UniProtKB" id="Q99KJ8"/>
    </source>
</evidence>
<evidence type="ECO:0000255" key="4"/>
<evidence type="ECO:0000256" key="5">
    <source>
        <dbReference type="SAM" id="MobiDB-lite"/>
    </source>
</evidence>
<evidence type="ECO:0000305" key="6"/>
<keyword id="KW-0175">Coiled coil</keyword>
<keyword id="KW-0963">Cytoplasm</keyword>
<keyword id="KW-0206">Cytoskeleton</keyword>
<keyword id="KW-0243">Dynein</keyword>
<keyword id="KW-0472">Membrane</keyword>
<keyword id="KW-0493">Microtubule</keyword>
<keyword id="KW-1185">Reference proteome</keyword>
<protein>
    <recommendedName>
        <fullName>Dynactin subunit 2-A</fullName>
    </recommendedName>
</protein>
<proteinExistence type="evidence at transcript level"/>
<name>DCT2A_XENLA</name>
<dbReference type="EMBL" id="BC081081">
    <property type="protein sequence ID" value="AAH81081.1"/>
    <property type="molecule type" value="mRNA"/>
</dbReference>
<dbReference type="RefSeq" id="NP_001087686.1">
    <property type="nucleotide sequence ID" value="NM_001094217.1"/>
</dbReference>
<dbReference type="DNASU" id="447510"/>
<dbReference type="GeneID" id="447510"/>
<dbReference type="KEGG" id="xla:447510"/>
<dbReference type="AGR" id="Xenbase:XB-GENE-1000638"/>
<dbReference type="CTD" id="447510"/>
<dbReference type="Xenbase" id="XB-GENE-1000638">
    <property type="gene designation" value="dctn2.L"/>
</dbReference>
<dbReference type="OrthoDB" id="4977at2759"/>
<dbReference type="Proteomes" id="UP000186698">
    <property type="component" value="Chromosome 2L"/>
</dbReference>
<dbReference type="Bgee" id="447510">
    <property type="expression patterns" value="Expressed in ovary and 19 other cell types or tissues"/>
</dbReference>
<dbReference type="GO" id="GO:0005813">
    <property type="term" value="C:centrosome"/>
    <property type="evidence" value="ECO:0000318"/>
    <property type="project" value="GO_Central"/>
</dbReference>
<dbReference type="GO" id="GO:0005737">
    <property type="term" value="C:cytoplasm"/>
    <property type="evidence" value="ECO:0000318"/>
    <property type="project" value="GO_Central"/>
</dbReference>
<dbReference type="GO" id="GO:0005869">
    <property type="term" value="C:dynactin complex"/>
    <property type="evidence" value="ECO:0000318"/>
    <property type="project" value="GO_Central"/>
</dbReference>
<dbReference type="GO" id="GO:0030286">
    <property type="term" value="C:dynein complex"/>
    <property type="evidence" value="ECO:0007669"/>
    <property type="project" value="UniProtKB-KW"/>
</dbReference>
<dbReference type="GO" id="GO:0016020">
    <property type="term" value="C:membrane"/>
    <property type="evidence" value="ECO:0007669"/>
    <property type="project" value="UniProtKB-SubCell"/>
</dbReference>
<dbReference type="GO" id="GO:0005874">
    <property type="term" value="C:microtubule"/>
    <property type="evidence" value="ECO:0007669"/>
    <property type="project" value="UniProtKB-KW"/>
</dbReference>
<dbReference type="GO" id="GO:0031982">
    <property type="term" value="C:vesicle"/>
    <property type="evidence" value="ECO:0000250"/>
    <property type="project" value="UniProtKB"/>
</dbReference>
<dbReference type="GO" id="GO:0007052">
    <property type="term" value="P:mitotic spindle organization"/>
    <property type="evidence" value="ECO:0000318"/>
    <property type="project" value="GO_Central"/>
</dbReference>
<dbReference type="InterPro" id="IPR028133">
    <property type="entry name" value="Dynamitin"/>
</dbReference>
<dbReference type="PANTHER" id="PTHR15346">
    <property type="entry name" value="DYNACTIN SUBUNIT"/>
    <property type="match status" value="1"/>
</dbReference>
<dbReference type="Pfam" id="PF04912">
    <property type="entry name" value="Dynamitin"/>
    <property type="match status" value="1"/>
</dbReference>
<comment type="function">
    <text evidence="1 3">Part of the dynactin complex that activates the molecular motor dynein for ultra-processive transport along microtubules. In the dynactin soulder domain, binds the ACTR1A filament and acts as a molecular ruler to determine the length (By similarity). Modulates cytoplasmic dynein binding to an organelle, and plays a role in prometaphase chromosome alignment and spindle organization during mitosis. Involved in anchoring microtubules to centrosomes (By similarity).</text>
</comment>
<comment type="subunit">
    <text evidence="1">Subunit of dynactin, a multiprotein complex part of a tripartite complex with dynein and a adapter, such as BICDL1, BICD2 or HOOK3. The dynactin complex is built around ACTR1A/ACTB filament and consists of an actin-related filament composed of a shoulder domain, a pointed end and a barbed end. Its length is defined by its flexible shoulder domain. The soulder is composed of 2 DCTN1 subunits, 4 DCTN2 and 2 DCTN3.</text>
</comment>
<comment type="subcellular location">
    <subcellularLocation>
        <location evidence="2">Cytoplasm</location>
        <location evidence="2">Cytoskeleton</location>
        <location evidence="2">Microtubule organizing center</location>
        <location evidence="2">Centrosome</location>
    </subcellularLocation>
    <subcellularLocation>
        <location evidence="2">Membrane</location>
        <topology evidence="2">Peripheral membrane protein</topology>
    </subcellularLocation>
    <subcellularLocation>
        <location evidence="1">Cytoplasm</location>
        <location evidence="1">Cytoskeleton</location>
    </subcellularLocation>
</comment>
<comment type="similarity">
    <text evidence="6">Belongs to the dynactin subunit 2 family.</text>
</comment>
<accession>Q66J30</accession>
<feature type="chain" id="PRO_0000288769" description="Dynactin subunit 2-A">
    <location>
        <begin position="1"/>
        <end position="403"/>
    </location>
</feature>
<feature type="region of interest" description="Disordered" evidence="5">
    <location>
        <begin position="1"/>
        <end position="26"/>
    </location>
</feature>
<feature type="region of interest" description="Disordered" evidence="5">
    <location>
        <begin position="183"/>
        <end position="203"/>
    </location>
</feature>
<feature type="coiled-coil region" evidence="4">
    <location>
        <begin position="99"/>
        <end position="132"/>
    </location>
</feature>
<feature type="coiled-coil region" evidence="4">
    <location>
        <begin position="381"/>
        <end position="401"/>
    </location>
</feature>